<accession>P62773</accession>
<accession>P00050</accession>
<proteinExistence type="evidence at protein level"/>
<evidence type="ECO:0000269" key="1">
    <source>
    </source>
</evidence>
<evidence type="ECO:0000305" key="2"/>
<feature type="chain" id="PRO_0000108289" description="Cytochrome c">
    <location>
        <begin position="1"/>
        <end position="111"/>
    </location>
</feature>
<feature type="binding site" description="covalent">
    <location>
        <position position="22"/>
    </location>
    <ligand>
        <name>heme c</name>
        <dbReference type="ChEBI" id="CHEBI:61717"/>
    </ligand>
</feature>
<feature type="binding site" description="covalent">
    <location>
        <position position="25"/>
    </location>
    <ligand>
        <name>heme c</name>
        <dbReference type="ChEBI" id="CHEBI:61717"/>
    </ligand>
</feature>
<feature type="binding site" description="axial binding residue">
    <location>
        <position position="26"/>
    </location>
    <ligand>
        <name>heme c</name>
        <dbReference type="ChEBI" id="CHEBI:61717"/>
    </ligand>
    <ligandPart>
        <name>Fe</name>
        <dbReference type="ChEBI" id="CHEBI:18248"/>
    </ligandPart>
</feature>
<feature type="binding site" description="axial binding residue">
    <location>
        <position position="88"/>
    </location>
    <ligand>
        <name>heme c</name>
        <dbReference type="ChEBI" id="CHEBI:61717"/>
    </ligand>
    <ligandPart>
        <name>Fe</name>
        <dbReference type="ChEBI" id="CHEBI:18248"/>
    </ligandPart>
</feature>
<feature type="modified residue" description="N-acetylalanine" evidence="1">
    <location>
        <position position="1"/>
    </location>
</feature>
<feature type="modified residue" description="N6,N6,N6-trimethyllysine" evidence="1">
    <location>
        <position position="80"/>
    </location>
</feature>
<feature type="modified residue" description="N6,N6,N6-trimethyllysine" evidence="1">
    <location>
        <position position="94"/>
    </location>
</feature>
<keyword id="KW-0007">Acetylation</keyword>
<keyword id="KW-0903">Direct protein sequencing</keyword>
<keyword id="KW-0249">Electron transport</keyword>
<keyword id="KW-0349">Heme</keyword>
<keyword id="KW-0408">Iron</keyword>
<keyword id="KW-0479">Metal-binding</keyword>
<keyword id="KW-0488">Methylation</keyword>
<keyword id="KW-0496">Mitochondrion</keyword>
<keyword id="KW-0679">Respiratory chain</keyword>
<keyword id="KW-0813">Transport</keyword>
<comment type="function">
    <text>Electron carrier protein. The oxidized form of the cytochrome c heme group can accept an electron from the heme group of the cytochrome c1 subunit of cytochrome reductase. Cytochrome c then transfers this electron to the cytochrome oxidase complex, the final protein carrier in the mitochondrial electron-transport chain.</text>
</comment>
<comment type="subcellular location">
    <subcellularLocation>
        <location>Mitochondrion intermembrane space</location>
    </subcellularLocation>
    <text>Loosely associated with the inner membrane.</text>
</comment>
<comment type="PTM">
    <text>Binds 1 heme c group covalently per subunit.</text>
</comment>
<comment type="similarity">
    <text evidence="2">Belongs to the cytochrome c family.</text>
</comment>
<comment type="online information" name="Protein Spotlight">
    <link uri="https://www.proteinspotlight.org/back_issues/076"/>
    <text>Life shuttle - Issue 76 of November 2006</text>
</comment>
<organism>
    <name type="scientific">Brassica oleracea</name>
    <name type="common">Wild cabbage</name>
    <dbReference type="NCBI Taxonomy" id="3712"/>
    <lineage>
        <taxon>Eukaryota</taxon>
        <taxon>Viridiplantae</taxon>
        <taxon>Streptophyta</taxon>
        <taxon>Embryophyta</taxon>
        <taxon>Tracheophyta</taxon>
        <taxon>Spermatophyta</taxon>
        <taxon>Magnoliopsida</taxon>
        <taxon>eudicotyledons</taxon>
        <taxon>Gunneridae</taxon>
        <taxon>Pentapetalae</taxon>
        <taxon>rosids</taxon>
        <taxon>malvids</taxon>
        <taxon>Brassicales</taxon>
        <taxon>Brassicaceae</taxon>
        <taxon>Brassiceae</taxon>
        <taxon>Brassica</taxon>
    </lineage>
</organism>
<dbReference type="PIR" id="A04613">
    <property type="entry name" value="CCRPBO"/>
</dbReference>
<dbReference type="SMR" id="P62773"/>
<dbReference type="iPTMnet" id="P62773"/>
<dbReference type="GO" id="GO:0005758">
    <property type="term" value="C:mitochondrial intermembrane space"/>
    <property type="evidence" value="ECO:0007669"/>
    <property type="project" value="UniProtKB-SubCell"/>
</dbReference>
<dbReference type="GO" id="GO:0009055">
    <property type="term" value="F:electron transfer activity"/>
    <property type="evidence" value="ECO:0007669"/>
    <property type="project" value="InterPro"/>
</dbReference>
<dbReference type="GO" id="GO:0020037">
    <property type="term" value="F:heme binding"/>
    <property type="evidence" value="ECO:0007669"/>
    <property type="project" value="InterPro"/>
</dbReference>
<dbReference type="GO" id="GO:0046872">
    <property type="term" value="F:metal ion binding"/>
    <property type="evidence" value="ECO:0007669"/>
    <property type="project" value="UniProtKB-KW"/>
</dbReference>
<dbReference type="FunFam" id="1.10.760.10:FF:000001">
    <property type="entry name" value="Cytochrome c iso-1"/>
    <property type="match status" value="1"/>
</dbReference>
<dbReference type="Gene3D" id="1.10.760.10">
    <property type="entry name" value="Cytochrome c-like domain"/>
    <property type="match status" value="1"/>
</dbReference>
<dbReference type="InterPro" id="IPR009056">
    <property type="entry name" value="Cyt_c-like_dom"/>
</dbReference>
<dbReference type="InterPro" id="IPR036909">
    <property type="entry name" value="Cyt_c-like_dom_sf"/>
</dbReference>
<dbReference type="InterPro" id="IPR002327">
    <property type="entry name" value="Cyt_c_1A/1B"/>
</dbReference>
<dbReference type="PANTHER" id="PTHR11961">
    <property type="entry name" value="CYTOCHROME C"/>
    <property type="match status" value="1"/>
</dbReference>
<dbReference type="Pfam" id="PF00034">
    <property type="entry name" value="Cytochrom_C"/>
    <property type="match status" value="1"/>
</dbReference>
<dbReference type="PRINTS" id="PR00604">
    <property type="entry name" value="CYTCHRMECIAB"/>
</dbReference>
<dbReference type="SUPFAM" id="SSF46626">
    <property type="entry name" value="Cytochrome c"/>
    <property type="match status" value="1"/>
</dbReference>
<dbReference type="PROSITE" id="PS51007">
    <property type="entry name" value="CYTC"/>
    <property type="match status" value="1"/>
</dbReference>
<protein>
    <recommendedName>
        <fullName>Cytochrome c</fullName>
    </recommendedName>
</protein>
<sequence length="111" mass="12083">ASFDEAPPGNSKAGEKIFKTKCAQCHTVDKGAGHKQGPNLNGLFGRQSGTTAGYSYSAANKNKAVEWEEKTLYDYLLNPKKYIPGTKMVFPGLKKPQDRADLIAYLKEATA</sequence>
<reference key="1">
    <citation type="journal article" date="1971" name="Biochem. J.">
        <title>The amino acid sequence of cytochrome c of Fagopyrum esculentum Moench (buckwheat) and Brassica oleracea L. (cauliflower).</title>
        <authorList>
            <person name="Thompson E.W."/>
            <person name="Richardson M."/>
            <person name="Boulter D."/>
        </authorList>
    </citation>
    <scope>PROTEIN SEQUENCE</scope>
    <scope>ACETYLATION AT ALA-1</scope>
    <scope>METHYLATION AT LYS-80 AND LYS-94</scope>
</reference>
<name>CYC_BRAOL</name>